<keyword id="KW-0539">Nucleus</keyword>
<keyword id="KW-1185">Reference proteome</keyword>
<keyword id="KW-0690">Ribosome biogenesis</keyword>
<keyword id="KW-0698">rRNA processing</keyword>
<feature type="chain" id="PRO_0000308731" description="Pre-rRNA-processing protein IPI1">
    <location>
        <begin position="1"/>
        <end position="338"/>
    </location>
</feature>
<feature type="region of interest" description="Disordered" evidence="2">
    <location>
        <begin position="1"/>
        <end position="25"/>
    </location>
</feature>
<accession>Q759I2</accession>
<evidence type="ECO:0000250" key="1">
    <source>
        <dbReference type="UniProtKB" id="P38803"/>
    </source>
</evidence>
<evidence type="ECO:0000256" key="2">
    <source>
        <dbReference type="SAM" id="MobiDB-lite"/>
    </source>
</evidence>
<evidence type="ECO:0000305" key="3"/>
<reference key="1">
    <citation type="journal article" date="2004" name="Science">
        <title>The Ashbya gossypii genome as a tool for mapping the ancient Saccharomyces cerevisiae genome.</title>
        <authorList>
            <person name="Dietrich F.S."/>
            <person name="Voegeli S."/>
            <person name="Brachat S."/>
            <person name="Lerch A."/>
            <person name="Gates K."/>
            <person name="Steiner S."/>
            <person name="Mohr C."/>
            <person name="Poehlmann R."/>
            <person name="Luedi P."/>
            <person name="Choi S."/>
            <person name="Wing R.A."/>
            <person name="Flavier A."/>
            <person name="Gaffney T.D."/>
            <person name="Philippsen P."/>
        </authorList>
    </citation>
    <scope>NUCLEOTIDE SEQUENCE [LARGE SCALE GENOMIC DNA]</scope>
    <source>
        <strain>ATCC 10895 / CBS 109.51 / FGSC 9923 / NRRL Y-1056</strain>
    </source>
</reference>
<reference key="2">
    <citation type="journal article" date="2013" name="G3 (Bethesda)">
        <title>Genomes of Ashbya fungi isolated from insects reveal four mating-type loci, numerous translocations, lack of transposons, and distinct gene duplications.</title>
        <authorList>
            <person name="Dietrich F.S."/>
            <person name="Voegeli S."/>
            <person name="Kuo S."/>
            <person name="Philippsen P."/>
        </authorList>
    </citation>
    <scope>GENOME REANNOTATION</scope>
    <source>
        <strain>ATCC 10895 / CBS 109.51 / FGSC 9923 / NRRL Y-1056</strain>
    </source>
</reference>
<gene>
    <name type="primary">IPI1</name>
    <name type="ordered locus">ADR306W</name>
</gene>
<proteinExistence type="inferred from homology"/>
<comment type="function">
    <text evidence="1">Component of the RIX1 complex required for processing of ITS2 sequences from 35S pre-rRNA.</text>
</comment>
<comment type="subunit">
    <text evidence="1">Component of the RIX1 complex, composed of IPI1, RIX1/IPI2 and IPI3 in a 1:2:2 stoichiometry. The complex interacts (via RIX1) with MDN1 (via its hexameric AAA ATPase ring) and the pre-60S ribosome particles.</text>
</comment>
<comment type="subcellular location">
    <subcellularLocation>
        <location evidence="1">Nucleus</location>
    </subcellularLocation>
</comment>
<comment type="similarity">
    <text evidence="3">Belongs to the IPI1/TEX10 family.</text>
</comment>
<organism>
    <name type="scientific">Eremothecium gossypii (strain ATCC 10895 / CBS 109.51 / FGSC 9923 / NRRL Y-1056)</name>
    <name type="common">Yeast</name>
    <name type="synonym">Ashbya gossypii</name>
    <dbReference type="NCBI Taxonomy" id="284811"/>
    <lineage>
        <taxon>Eukaryota</taxon>
        <taxon>Fungi</taxon>
        <taxon>Dikarya</taxon>
        <taxon>Ascomycota</taxon>
        <taxon>Saccharomycotina</taxon>
        <taxon>Saccharomycetes</taxon>
        <taxon>Saccharomycetales</taxon>
        <taxon>Saccharomycetaceae</taxon>
        <taxon>Eremothecium</taxon>
    </lineage>
</organism>
<protein>
    <recommendedName>
        <fullName>Pre-rRNA-processing protein IPI1</fullName>
    </recommendedName>
</protein>
<sequence length="338" mass="36839">MAKKKTLKQQDFQKKKLKVGKPKQAASNATDTSFVAKTIHLPNQTKLTSTNDAEADLLRRLSLCKHHSEITRKETLIYLQVAVPRVIHGQVASRLMSACIPLMCDPNKHVREELLKLLDVVGSCDANTMRLYMRPLVLFMGSAMTHISAGVQRDSGRFLQCVLRHAGHELVRAAWVKMLRGLCNVLGWPLRGAASASAGAGSNVVSMHKNRALQHQNLQALADFIRLGCAEPAAAALAGCAAPALYAKYLLPDCPQPYSHLKLFVREFPADTAAAARPLHELDTLVCEDAATRRDVFLGHFRPVLAAQLPSLVKDGGDCGRVAANLLQLLDHVQQAAA</sequence>
<dbReference type="EMBL" id="AE016817">
    <property type="protein sequence ID" value="AAS52226.2"/>
    <property type="molecule type" value="Genomic_DNA"/>
</dbReference>
<dbReference type="RefSeq" id="NP_984402.2">
    <property type="nucleotide sequence ID" value="NM_209755.2"/>
</dbReference>
<dbReference type="SMR" id="Q759I2"/>
<dbReference type="FunCoup" id="Q759I2">
    <property type="interactions" value="270"/>
</dbReference>
<dbReference type="STRING" id="284811.Q759I2"/>
<dbReference type="EnsemblFungi" id="AAS52226">
    <property type="protein sequence ID" value="AAS52226"/>
    <property type="gene ID" value="AGOS_ADR306W"/>
</dbReference>
<dbReference type="GeneID" id="4620568"/>
<dbReference type="KEGG" id="ago:AGOS_ADR306W"/>
<dbReference type="eggNOG" id="KOG2149">
    <property type="taxonomic scope" value="Eukaryota"/>
</dbReference>
<dbReference type="HOGENOM" id="CLU_050252_2_0_1"/>
<dbReference type="InParanoid" id="Q759I2"/>
<dbReference type="OMA" id="CAGGWVK"/>
<dbReference type="OrthoDB" id="361362at2759"/>
<dbReference type="Proteomes" id="UP000000591">
    <property type="component" value="Chromosome IV"/>
</dbReference>
<dbReference type="GO" id="GO:0005829">
    <property type="term" value="C:cytosol"/>
    <property type="evidence" value="ECO:0007669"/>
    <property type="project" value="EnsemblFungi"/>
</dbReference>
<dbReference type="GO" id="GO:0005654">
    <property type="term" value="C:nucleoplasm"/>
    <property type="evidence" value="ECO:0007669"/>
    <property type="project" value="EnsemblFungi"/>
</dbReference>
<dbReference type="GO" id="GO:0005634">
    <property type="term" value="C:nucleus"/>
    <property type="evidence" value="ECO:0000318"/>
    <property type="project" value="GO_Central"/>
</dbReference>
<dbReference type="GO" id="GO:0120330">
    <property type="term" value="C:rixosome complex"/>
    <property type="evidence" value="ECO:0000318"/>
    <property type="project" value="GO_Central"/>
</dbReference>
<dbReference type="GO" id="GO:0003682">
    <property type="term" value="F:chromatin binding"/>
    <property type="evidence" value="ECO:0007669"/>
    <property type="project" value="EnsemblFungi"/>
</dbReference>
<dbReference type="GO" id="GO:0000463">
    <property type="term" value="P:maturation of LSU-rRNA from tricistronic rRNA transcript (SSU-rRNA, 5.8S rRNA, LSU-rRNA)"/>
    <property type="evidence" value="ECO:0007669"/>
    <property type="project" value="EnsemblFungi"/>
</dbReference>
<dbReference type="GO" id="GO:0006267">
    <property type="term" value="P:pre-replicative complex assembly involved in nuclear cell cycle DNA replication"/>
    <property type="evidence" value="ECO:0007669"/>
    <property type="project" value="EnsemblFungi"/>
</dbReference>
<dbReference type="GO" id="GO:0030174">
    <property type="term" value="P:regulation of DNA-templated DNA replication initiation"/>
    <property type="evidence" value="ECO:0007669"/>
    <property type="project" value="EnsemblFungi"/>
</dbReference>
<dbReference type="GO" id="GO:0000027">
    <property type="term" value="P:ribosomal large subunit assembly"/>
    <property type="evidence" value="ECO:0007669"/>
    <property type="project" value="EnsemblFungi"/>
</dbReference>
<dbReference type="GO" id="GO:0006364">
    <property type="term" value="P:rRNA processing"/>
    <property type="evidence" value="ECO:0000318"/>
    <property type="project" value="GO_Central"/>
</dbReference>
<dbReference type="InterPro" id="IPR016024">
    <property type="entry name" value="ARM-type_fold"/>
</dbReference>
<dbReference type="InterPro" id="IPR024679">
    <property type="entry name" value="Ipi1_N"/>
</dbReference>
<dbReference type="PANTHER" id="PTHR16056">
    <property type="entry name" value="REGULATOR OF MICROTUBULE DYNAMICS PROTEIN"/>
    <property type="match status" value="1"/>
</dbReference>
<dbReference type="PANTHER" id="PTHR16056:SF2">
    <property type="entry name" value="TESTIS-EXPRESSED PROTEIN 10"/>
    <property type="match status" value="1"/>
</dbReference>
<dbReference type="Pfam" id="PF12333">
    <property type="entry name" value="Ipi1_N"/>
    <property type="match status" value="1"/>
</dbReference>
<dbReference type="SUPFAM" id="SSF48371">
    <property type="entry name" value="ARM repeat"/>
    <property type="match status" value="1"/>
</dbReference>
<name>IPI1_EREGS</name>